<organism>
    <name type="scientific">Cucumis sativus</name>
    <name type="common">Cucumber</name>
    <dbReference type="NCBI Taxonomy" id="3659"/>
    <lineage>
        <taxon>Eukaryota</taxon>
        <taxon>Viridiplantae</taxon>
        <taxon>Streptophyta</taxon>
        <taxon>Embryophyta</taxon>
        <taxon>Tracheophyta</taxon>
        <taxon>Spermatophyta</taxon>
        <taxon>Magnoliopsida</taxon>
        <taxon>eudicotyledons</taxon>
        <taxon>Gunneridae</taxon>
        <taxon>Pentapetalae</taxon>
        <taxon>rosids</taxon>
        <taxon>fabids</taxon>
        <taxon>Cucurbitales</taxon>
        <taxon>Cucurbitaceae</taxon>
        <taxon>Benincaseae</taxon>
        <taxon>Cucumis</taxon>
    </lineage>
</organism>
<geneLocation type="chloroplast"/>
<keyword id="KW-0150">Chloroplast</keyword>
<keyword id="KW-0934">Plastid</keyword>
<keyword id="KW-0687">Ribonucleoprotein</keyword>
<keyword id="KW-0689">Ribosomal protein</keyword>
<reference key="1">
    <citation type="journal article" date="2006" name="Plant Cell Rep.">
        <title>Complete sequence and organization of the cucumber (Cucumis sativus L. cv. Baekmibaekdadagi) chloroplast genome.</title>
        <authorList>
            <person name="Kim J.-S."/>
            <person name="Jung J.D."/>
            <person name="Lee J.-A."/>
            <person name="Park H.-W."/>
            <person name="Oh K.-H."/>
            <person name="Jeong W.J."/>
            <person name="Choi D.-W."/>
            <person name="Liu J.R."/>
            <person name="Cho K.Y."/>
        </authorList>
    </citation>
    <scope>NUCLEOTIDE SEQUENCE [LARGE SCALE GENOMIC DNA]</scope>
    <source>
        <strain>cv. Baekmibaekdadagi</strain>
    </source>
</reference>
<reference key="2">
    <citation type="journal article" date="2007" name="Cell. Mol. Biol. Lett.">
        <title>The complete structure of the cucumber (Cucumis sativus L.) chloroplast genome: its composition and comparative analysis.</title>
        <authorList>
            <person name="Plader W.W."/>
            <person name="Yukawa Y."/>
            <person name="Sugiura M."/>
            <person name="Malepszy S."/>
        </authorList>
    </citation>
    <scope>NUCLEOTIDE SEQUENCE [LARGE SCALE GENOMIC DNA]</scope>
    <source>
        <strain>cv. Borszczagowski</strain>
    </source>
</reference>
<reference key="3">
    <citation type="journal article" date="2007" name="Genome">
        <title>Sequencing cucumber (Cucumis sativus L.) chloroplast genomes identifies differences between chilling-tolerant and -susceptible cucumber lines.</title>
        <authorList>
            <person name="Chung S.-M."/>
            <person name="Gordon V.S."/>
            <person name="Staub J.E."/>
        </authorList>
    </citation>
    <scope>NUCLEOTIDE SEQUENCE [LARGE SCALE GENOMIC DNA]</scope>
    <source>
        <strain>cv. Chipper</strain>
        <strain>cv. Gy14</strain>
    </source>
</reference>
<dbReference type="EMBL" id="DQ119058">
    <property type="protein sequence ID" value="AAZ94687.1"/>
    <property type="molecule type" value="Genomic_DNA"/>
</dbReference>
<dbReference type="EMBL" id="AJ970307">
    <property type="protein sequence ID" value="CAJ00796.1"/>
    <property type="molecule type" value="Genomic_DNA"/>
</dbReference>
<dbReference type="EMBL" id="DQ865975">
    <property type="protein sequence ID" value="ABI97454.1"/>
    <property type="molecule type" value="Genomic_DNA"/>
</dbReference>
<dbReference type="EMBL" id="DQ865976">
    <property type="protein sequence ID" value="ABI98783.1"/>
    <property type="molecule type" value="Genomic_DNA"/>
</dbReference>
<dbReference type="RefSeq" id="YP_247637.1">
    <property type="nucleotide sequence ID" value="NC_007144.1"/>
</dbReference>
<dbReference type="SMR" id="Q4VZN1"/>
<dbReference type="GeneID" id="3429291"/>
<dbReference type="KEGG" id="csv:3429291"/>
<dbReference type="OrthoDB" id="1850746at2759"/>
<dbReference type="GO" id="GO:0009507">
    <property type="term" value="C:chloroplast"/>
    <property type="evidence" value="ECO:0007669"/>
    <property type="project" value="UniProtKB-SubCell"/>
</dbReference>
<dbReference type="GO" id="GO:1990904">
    <property type="term" value="C:ribonucleoprotein complex"/>
    <property type="evidence" value="ECO:0007669"/>
    <property type="project" value="UniProtKB-KW"/>
</dbReference>
<dbReference type="GO" id="GO:0005840">
    <property type="term" value="C:ribosome"/>
    <property type="evidence" value="ECO:0007669"/>
    <property type="project" value="UniProtKB-KW"/>
</dbReference>
<dbReference type="GO" id="GO:0019843">
    <property type="term" value="F:rRNA binding"/>
    <property type="evidence" value="ECO:0007669"/>
    <property type="project" value="InterPro"/>
</dbReference>
<dbReference type="GO" id="GO:0003735">
    <property type="term" value="F:structural constituent of ribosome"/>
    <property type="evidence" value="ECO:0007669"/>
    <property type="project" value="InterPro"/>
</dbReference>
<dbReference type="GO" id="GO:0006412">
    <property type="term" value="P:translation"/>
    <property type="evidence" value="ECO:0007669"/>
    <property type="project" value="UniProtKB-UniRule"/>
</dbReference>
<dbReference type="CDD" id="cd01433">
    <property type="entry name" value="Ribosomal_L16_L10e"/>
    <property type="match status" value="1"/>
</dbReference>
<dbReference type="FunFam" id="3.90.1170.10:FF:000001">
    <property type="entry name" value="50S ribosomal protein L16"/>
    <property type="match status" value="1"/>
</dbReference>
<dbReference type="Gene3D" id="3.90.1170.10">
    <property type="entry name" value="Ribosomal protein L10e/L16"/>
    <property type="match status" value="1"/>
</dbReference>
<dbReference type="HAMAP" id="MF_01342">
    <property type="entry name" value="Ribosomal_uL16"/>
    <property type="match status" value="1"/>
</dbReference>
<dbReference type="InterPro" id="IPR047873">
    <property type="entry name" value="Ribosomal_uL16"/>
</dbReference>
<dbReference type="InterPro" id="IPR000114">
    <property type="entry name" value="Ribosomal_uL16_bact-type"/>
</dbReference>
<dbReference type="InterPro" id="IPR020798">
    <property type="entry name" value="Ribosomal_uL16_CS"/>
</dbReference>
<dbReference type="InterPro" id="IPR016180">
    <property type="entry name" value="Ribosomal_uL16_dom"/>
</dbReference>
<dbReference type="InterPro" id="IPR036920">
    <property type="entry name" value="Ribosomal_uL16_sf"/>
</dbReference>
<dbReference type="NCBIfam" id="TIGR01164">
    <property type="entry name" value="rplP_bact"/>
    <property type="match status" value="1"/>
</dbReference>
<dbReference type="PANTHER" id="PTHR12220">
    <property type="entry name" value="50S/60S RIBOSOMAL PROTEIN L16"/>
    <property type="match status" value="1"/>
</dbReference>
<dbReference type="PANTHER" id="PTHR12220:SF13">
    <property type="entry name" value="LARGE RIBOSOMAL SUBUNIT PROTEIN UL16M"/>
    <property type="match status" value="1"/>
</dbReference>
<dbReference type="Pfam" id="PF00252">
    <property type="entry name" value="Ribosomal_L16"/>
    <property type="match status" value="1"/>
</dbReference>
<dbReference type="PRINTS" id="PR00060">
    <property type="entry name" value="RIBOSOMALL16"/>
</dbReference>
<dbReference type="SUPFAM" id="SSF54686">
    <property type="entry name" value="Ribosomal protein L16p/L10e"/>
    <property type="match status" value="1"/>
</dbReference>
<dbReference type="PROSITE" id="PS00586">
    <property type="entry name" value="RIBOSOMAL_L16_1"/>
    <property type="match status" value="1"/>
</dbReference>
<dbReference type="PROSITE" id="PS00701">
    <property type="entry name" value="RIBOSOMAL_L16_2"/>
    <property type="match status" value="1"/>
</dbReference>
<gene>
    <name evidence="1" type="primary">rpl16</name>
    <name type="ordered locus">CsCp079</name>
</gene>
<comment type="subunit">
    <text evidence="1">Part of the 50S ribosomal subunit.</text>
</comment>
<comment type="subcellular location">
    <subcellularLocation>
        <location>Plastid</location>
        <location>Chloroplast</location>
    </subcellularLocation>
</comment>
<comment type="similarity">
    <text evidence="1">Belongs to the universal ribosomal protein uL16 family.</text>
</comment>
<protein>
    <recommendedName>
        <fullName evidence="1">Large ribosomal subunit protein uL16c</fullName>
    </recommendedName>
    <alternativeName>
        <fullName evidence="2">50S ribosomal protein L16, chloroplastic</fullName>
    </alternativeName>
</protein>
<feature type="chain" id="PRO_0000062276" description="Large ribosomal subunit protein uL16c">
    <location>
        <begin position="1"/>
        <end position="135"/>
    </location>
</feature>
<feature type="sequence conflict" description="In Ref. 3; ABI98783/ABI97454." evidence="2" ref="3">
    <original>S</original>
    <variation>N</variation>
    <location>
        <position position="3"/>
    </location>
</feature>
<proteinExistence type="inferred from homology"/>
<accession>Q4VZN1</accession>
<accession>A5J1X2</accession>
<accession>Q2QD52</accession>
<name>RK16_CUCSA</name>
<evidence type="ECO:0000255" key="1">
    <source>
        <dbReference type="HAMAP-Rule" id="MF_01342"/>
    </source>
</evidence>
<evidence type="ECO:0000305" key="2"/>
<sequence>MLSPKRTRFRKHHRGRMKGISYRGNSICFGRYAIQALEPAWITSRQIEAGRRAMTRNARRGGKIWVRIFPDKPVTLRPTETRMGSGKGSPEYWVAVVKPGRILYEMSGVAENIARKAISIAASKMPIRTQFITSG</sequence>